<keyword id="KW-0574">Periplasm</keyword>
<keyword id="KW-0732">Signal</keyword>
<proteinExistence type="inferred from homology"/>
<accession>Q2NU55</accession>
<reference key="1">
    <citation type="journal article" date="2006" name="Genome Res.">
        <title>Massive genome erosion and functional adaptations provide insights into the symbiotic lifestyle of Sodalis glossinidius in the tsetse host.</title>
        <authorList>
            <person name="Toh H."/>
            <person name="Weiss B.L."/>
            <person name="Perkin S.A.H."/>
            <person name="Yamashita A."/>
            <person name="Oshima K."/>
            <person name="Hattori M."/>
            <person name="Aksoy S."/>
        </authorList>
    </citation>
    <scope>NUCLEOTIDE SEQUENCE [LARGE SCALE GENOMIC DNA]</scope>
    <source>
        <strain>morsitans</strain>
    </source>
</reference>
<organism>
    <name type="scientific">Sodalis glossinidius (strain morsitans)</name>
    <dbReference type="NCBI Taxonomy" id="343509"/>
    <lineage>
        <taxon>Bacteria</taxon>
        <taxon>Pseudomonadati</taxon>
        <taxon>Pseudomonadota</taxon>
        <taxon>Gammaproteobacteria</taxon>
        <taxon>Enterobacterales</taxon>
        <taxon>Bruguierivoracaceae</taxon>
        <taxon>Sodalis</taxon>
    </lineage>
</organism>
<comment type="function">
    <text evidence="1">Involved in the biosynthesis of osmoregulated periplasmic glucans (OPGs).</text>
</comment>
<comment type="pathway">
    <text evidence="1">Glycan metabolism; osmoregulated periplasmic glucan (OPG) biosynthesis.</text>
</comment>
<comment type="subcellular location">
    <subcellularLocation>
        <location evidence="1">Periplasm</location>
    </subcellularLocation>
</comment>
<comment type="similarity">
    <text evidence="1">Belongs to the OpgD/OpgG family.</text>
</comment>
<evidence type="ECO:0000255" key="1">
    <source>
        <dbReference type="HAMAP-Rule" id="MF_01069"/>
    </source>
</evidence>
<gene>
    <name evidence="1" type="primary">mdoG</name>
    <name evidence="1" type="synonym">opgG</name>
    <name type="ordered locus">SG1045</name>
</gene>
<feature type="signal peptide" evidence="1">
    <location>
        <begin position="1"/>
        <end position="33"/>
    </location>
</feature>
<feature type="chain" id="PRO_1000064570" description="Glucans biosynthesis protein G">
    <location>
        <begin position="34"/>
        <end position="522"/>
    </location>
</feature>
<protein>
    <recommendedName>
        <fullName evidence="1">Glucans biosynthesis protein G</fullName>
    </recommendedName>
</protein>
<sequence>MPNNKFFVKSSKASLRWLGATVLLTLYALPSWAFSIDDVAKQAQALAAKGYEAPKSNVPSQFREMKFADYQQIQFNHDKALWHDLPTPFKIEFYHQGMYFDQAVKINEVTATAVNEVKYSSDMFNFGSVNHDPDAVKDLGFAGFKILYPINQLDKNDEIVSMLGASYFRVIGKGQVYGLSARGLAIDTALASGEEFPRFREFWIERPKANDKHLVLYALLDSPRATGAYRFVIYPGRDTSVDVQSRVYLRDKVGKLGLAPLTSMFLFGPNQPAMTMNFRPALHDSDGLSIHAGNGEWIWRPLNNPRHLSVSTFQVENPRGFGLLQRGRDFFQYQDLDDRYDLRSSGWVEPRGDWGKGHVELVEIPTNDETNDNIVAFWTPEKLPDVGQPLELAYRLHFSRDEDKIHSADFAYVKQTLRSAGDVKQTNLTRQPDGTTAFQVDFVGQPLKELDQAAPVTSQISVGDNADVVENSVRFNPVTHGWRLTLRLKVKDTKQPTEMRAALVNGDKTLTETWSYLLPANE</sequence>
<dbReference type="EMBL" id="AP008232">
    <property type="protein sequence ID" value="BAE74320.1"/>
    <property type="molecule type" value="Genomic_DNA"/>
</dbReference>
<dbReference type="RefSeq" id="WP_011410905.1">
    <property type="nucleotide sequence ID" value="NC_007712.1"/>
</dbReference>
<dbReference type="SMR" id="Q2NU55"/>
<dbReference type="KEGG" id="sgl:SG1045"/>
<dbReference type="eggNOG" id="COG3131">
    <property type="taxonomic scope" value="Bacteria"/>
</dbReference>
<dbReference type="HOGENOM" id="CLU_023403_2_0_6"/>
<dbReference type="OrthoDB" id="335750at2"/>
<dbReference type="UniPathway" id="UPA00637"/>
<dbReference type="Proteomes" id="UP000001932">
    <property type="component" value="Chromosome"/>
</dbReference>
<dbReference type="GO" id="GO:0030288">
    <property type="term" value="C:outer membrane-bounded periplasmic space"/>
    <property type="evidence" value="ECO:0007669"/>
    <property type="project" value="TreeGrafter"/>
</dbReference>
<dbReference type="GO" id="GO:0030246">
    <property type="term" value="F:carbohydrate binding"/>
    <property type="evidence" value="ECO:0007669"/>
    <property type="project" value="InterPro"/>
</dbReference>
<dbReference type="GO" id="GO:0003824">
    <property type="term" value="F:catalytic activity"/>
    <property type="evidence" value="ECO:0007669"/>
    <property type="project" value="InterPro"/>
</dbReference>
<dbReference type="GO" id="GO:0051274">
    <property type="term" value="P:beta-glucan biosynthetic process"/>
    <property type="evidence" value="ECO:0007669"/>
    <property type="project" value="TreeGrafter"/>
</dbReference>
<dbReference type="FunFam" id="2.70.98.10:FF:000001">
    <property type="entry name" value="Glucans biosynthesis protein G"/>
    <property type="match status" value="1"/>
</dbReference>
<dbReference type="Gene3D" id="2.70.98.10">
    <property type="match status" value="1"/>
</dbReference>
<dbReference type="Gene3D" id="2.60.40.10">
    <property type="entry name" value="Immunoglobulins"/>
    <property type="match status" value="1"/>
</dbReference>
<dbReference type="HAMAP" id="MF_01069">
    <property type="entry name" value="MdoG_OpgG"/>
    <property type="match status" value="1"/>
</dbReference>
<dbReference type="InterPro" id="IPR011013">
    <property type="entry name" value="Gal_mutarotase_sf_dom"/>
</dbReference>
<dbReference type="InterPro" id="IPR014718">
    <property type="entry name" value="GH-type_carb-bd"/>
</dbReference>
<dbReference type="InterPro" id="IPR014438">
    <property type="entry name" value="Glucan_biosyn_MdoG/MdoD"/>
</dbReference>
<dbReference type="InterPro" id="IPR007444">
    <property type="entry name" value="Glucan_biosyn_MdoG_C"/>
</dbReference>
<dbReference type="InterPro" id="IPR013783">
    <property type="entry name" value="Ig-like_fold"/>
</dbReference>
<dbReference type="InterPro" id="IPR014756">
    <property type="entry name" value="Ig_E-set"/>
</dbReference>
<dbReference type="InterPro" id="IPR023704">
    <property type="entry name" value="MdoG_OpgG"/>
</dbReference>
<dbReference type="PANTHER" id="PTHR30504">
    <property type="entry name" value="GLUCANS BIOSYNTHESIS PROTEIN"/>
    <property type="match status" value="1"/>
</dbReference>
<dbReference type="PANTHER" id="PTHR30504:SF4">
    <property type="entry name" value="GLUCANS BIOSYNTHESIS PROTEIN G"/>
    <property type="match status" value="1"/>
</dbReference>
<dbReference type="Pfam" id="PF04349">
    <property type="entry name" value="MdoG"/>
    <property type="match status" value="1"/>
</dbReference>
<dbReference type="PIRSF" id="PIRSF006281">
    <property type="entry name" value="MdoG"/>
    <property type="match status" value="1"/>
</dbReference>
<dbReference type="SUPFAM" id="SSF81296">
    <property type="entry name" value="E set domains"/>
    <property type="match status" value="1"/>
</dbReference>
<dbReference type="SUPFAM" id="SSF74650">
    <property type="entry name" value="Galactose mutarotase-like"/>
    <property type="match status" value="1"/>
</dbReference>
<name>OPGG_SODGM</name>